<accession>Q2SL58</accession>
<gene>
    <name evidence="1" type="primary">rpsP</name>
    <name type="ordered locus">HCH_01772</name>
</gene>
<protein>
    <recommendedName>
        <fullName evidence="1">Small ribosomal subunit protein bS16</fullName>
    </recommendedName>
    <alternativeName>
        <fullName evidence="2">30S ribosomal protein S16</fullName>
    </alternativeName>
</protein>
<proteinExistence type="inferred from homology"/>
<comment type="similarity">
    <text evidence="1">Belongs to the bacterial ribosomal protein bS16 family.</text>
</comment>
<comment type="sequence caution" evidence="2">
    <conflict type="erroneous initiation">
        <sequence resource="EMBL-CDS" id="ABC28616"/>
    </conflict>
</comment>
<organism>
    <name type="scientific">Hahella chejuensis (strain KCTC 2396)</name>
    <dbReference type="NCBI Taxonomy" id="349521"/>
    <lineage>
        <taxon>Bacteria</taxon>
        <taxon>Pseudomonadati</taxon>
        <taxon>Pseudomonadota</taxon>
        <taxon>Gammaproteobacteria</taxon>
        <taxon>Oceanospirillales</taxon>
        <taxon>Hahellaceae</taxon>
        <taxon>Hahella</taxon>
    </lineage>
</organism>
<evidence type="ECO:0000255" key="1">
    <source>
        <dbReference type="HAMAP-Rule" id="MF_00385"/>
    </source>
</evidence>
<evidence type="ECO:0000305" key="2"/>
<dbReference type="EMBL" id="CP000155">
    <property type="protein sequence ID" value="ABC28616.1"/>
    <property type="status" value="ALT_INIT"/>
    <property type="molecule type" value="Genomic_DNA"/>
</dbReference>
<dbReference type="RefSeq" id="WP_041598502.1">
    <property type="nucleotide sequence ID" value="NC_007645.1"/>
</dbReference>
<dbReference type="SMR" id="Q2SL58"/>
<dbReference type="STRING" id="349521.HCH_01772"/>
<dbReference type="KEGG" id="hch:HCH_01772"/>
<dbReference type="eggNOG" id="COG0228">
    <property type="taxonomic scope" value="Bacteria"/>
</dbReference>
<dbReference type="HOGENOM" id="CLU_2081512_0_0_6"/>
<dbReference type="OrthoDB" id="9807878at2"/>
<dbReference type="Proteomes" id="UP000000238">
    <property type="component" value="Chromosome"/>
</dbReference>
<dbReference type="GO" id="GO:0005737">
    <property type="term" value="C:cytoplasm"/>
    <property type="evidence" value="ECO:0007669"/>
    <property type="project" value="UniProtKB-ARBA"/>
</dbReference>
<dbReference type="GO" id="GO:0015935">
    <property type="term" value="C:small ribosomal subunit"/>
    <property type="evidence" value="ECO:0007669"/>
    <property type="project" value="TreeGrafter"/>
</dbReference>
<dbReference type="GO" id="GO:0003735">
    <property type="term" value="F:structural constituent of ribosome"/>
    <property type="evidence" value="ECO:0007669"/>
    <property type="project" value="InterPro"/>
</dbReference>
<dbReference type="GO" id="GO:0006412">
    <property type="term" value="P:translation"/>
    <property type="evidence" value="ECO:0007669"/>
    <property type="project" value="UniProtKB-UniRule"/>
</dbReference>
<dbReference type="Gene3D" id="3.30.1320.10">
    <property type="match status" value="1"/>
</dbReference>
<dbReference type="HAMAP" id="MF_00385">
    <property type="entry name" value="Ribosomal_bS16"/>
    <property type="match status" value="1"/>
</dbReference>
<dbReference type="InterPro" id="IPR000307">
    <property type="entry name" value="Ribosomal_bS16"/>
</dbReference>
<dbReference type="InterPro" id="IPR023803">
    <property type="entry name" value="Ribosomal_bS16_dom_sf"/>
</dbReference>
<dbReference type="NCBIfam" id="TIGR00002">
    <property type="entry name" value="S16"/>
    <property type="match status" value="1"/>
</dbReference>
<dbReference type="PANTHER" id="PTHR12919">
    <property type="entry name" value="30S RIBOSOMAL PROTEIN S16"/>
    <property type="match status" value="1"/>
</dbReference>
<dbReference type="PANTHER" id="PTHR12919:SF20">
    <property type="entry name" value="SMALL RIBOSOMAL SUBUNIT PROTEIN BS16M"/>
    <property type="match status" value="1"/>
</dbReference>
<dbReference type="Pfam" id="PF00886">
    <property type="entry name" value="Ribosomal_S16"/>
    <property type="match status" value="1"/>
</dbReference>
<dbReference type="SUPFAM" id="SSF54565">
    <property type="entry name" value="Ribosomal protein S16"/>
    <property type="match status" value="1"/>
</dbReference>
<keyword id="KW-1185">Reference proteome</keyword>
<keyword id="KW-0687">Ribonucleoprotein</keyword>
<keyword id="KW-0689">Ribosomal protein</keyword>
<reference key="1">
    <citation type="journal article" date="2005" name="Nucleic Acids Res.">
        <title>Genomic blueprint of Hahella chejuensis, a marine microbe producing an algicidal agent.</title>
        <authorList>
            <person name="Jeong H."/>
            <person name="Yim J.H."/>
            <person name="Lee C."/>
            <person name="Choi S.-H."/>
            <person name="Park Y.K."/>
            <person name="Yoon S.H."/>
            <person name="Hur C.-G."/>
            <person name="Kang H.-Y."/>
            <person name="Kim D."/>
            <person name="Lee H.H."/>
            <person name="Park K.H."/>
            <person name="Park S.-H."/>
            <person name="Park H.-S."/>
            <person name="Lee H.K."/>
            <person name="Oh T.K."/>
            <person name="Kim J.F."/>
        </authorList>
    </citation>
    <scope>NUCLEOTIDE SEQUENCE [LARGE SCALE GENOMIC DNA]</scope>
    <source>
        <strain>KCTC 2396</strain>
    </source>
</reference>
<name>RS16_HAHCH</name>
<sequence>MVTIRLARGGSKKRPFYHLNVTDSRNARDGRFIERVGFFNPTARGNDERIRVDAERLQFWVERGAQMSDRVRDLVKASA</sequence>
<feature type="chain" id="PRO_0000243814" description="Small ribosomal subunit protein bS16">
    <location>
        <begin position="1"/>
        <end position="79"/>
    </location>
</feature>